<gene>
    <name evidence="1" type="primary">pcm</name>
    <name type="ordered locus">VSAL_I2508</name>
</gene>
<feature type="chain" id="PRO_1000093248" description="Protein-L-isoaspartate O-methyltransferase">
    <location>
        <begin position="1"/>
        <end position="208"/>
    </location>
</feature>
<feature type="active site" evidence="1">
    <location>
        <position position="59"/>
    </location>
</feature>
<comment type="function">
    <text evidence="1">Catalyzes the methyl esterification of L-isoaspartyl residues in peptides and proteins that result from spontaneous decomposition of normal L-aspartyl and L-asparaginyl residues. It plays a role in the repair and/or degradation of damaged proteins.</text>
</comment>
<comment type="catalytic activity">
    <reaction evidence="1">
        <text>[protein]-L-isoaspartate + S-adenosyl-L-methionine = [protein]-L-isoaspartate alpha-methyl ester + S-adenosyl-L-homocysteine</text>
        <dbReference type="Rhea" id="RHEA:12705"/>
        <dbReference type="Rhea" id="RHEA-COMP:12143"/>
        <dbReference type="Rhea" id="RHEA-COMP:12144"/>
        <dbReference type="ChEBI" id="CHEBI:57856"/>
        <dbReference type="ChEBI" id="CHEBI:59789"/>
        <dbReference type="ChEBI" id="CHEBI:90596"/>
        <dbReference type="ChEBI" id="CHEBI:90598"/>
        <dbReference type="EC" id="2.1.1.77"/>
    </reaction>
</comment>
<comment type="subcellular location">
    <subcellularLocation>
        <location evidence="1">Cytoplasm</location>
    </subcellularLocation>
</comment>
<comment type="similarity">
    <text evidence="1">Belongs to the methyltransferase superfamily. L-isoaspartyl/D-aspartyl protein methyltransferase family.</text>
</comment>
<dbReference type="EC" id="2.1.1.77" evidence="1"/>
<dbReference type="EMBL" id="FM178379">
    <property type="protein sequence ID" value="CAQ80192.1"/>
    <property type="molecule type" value="Genomic_DNA"/>
</dbReference>
<dbReference type="RefSeq" id="WP_012550980.1">
    <property type="nucleotide sequence ID" value="NC_011312.1"/>
</dbReference>
<dbReference type="SMR" id="B6EKL2"/>
<dbReference type="KEGG" id="vsa:VSAL_I2508"/>
<dbReference type="eggNOG" id="COG2518">
    <property type="taxonomic scope" value="Bacteria"/>
</dbReference>
<dbReference type="HOGENOM" id="CLU_055432_2_0_6"/>
<dbReference type="Proteomes" id="UP000001730">
    <property type="component" value="Chromosome 1"/>
</dbReference>
<dbReference type="GO" id="GO:0005737">
    <property type="term" value="C:cytoplasm"/>
    <property type="evidence" value="ECO:0007669"/>
    <property type="project" value="UniProtKB-SubCell"/>
</dbReference>
<dbReference type="GO" id="GO:0004719">
    <property type="term" value="F:protein-L-isoaspartate (D-aspartate) O-methyltransferase activity"/>
    <property type="evidence" value="ECO:0007669"/>
    <property type="project" value="UniProtKB-UniRule"/>
</dbReference>
<dbReference type="GO" id="GO:0032259">
    <property type="term" value="P:methylation"/>
    <property type="evidence" value="ECO:0007669"/>
    <property type="project" value="UniProtKB-KW"/>
</dbReference>
<dbReference type="GO" id="GO:0036211">
    <property type="term" value="P:protein modification process"/>
    <property type="evidence" value="ECO:0007669"/>
    <property type="project" value="UniProtKB-UniRule"/>
</dbReference>
<dbReference type="GO" id="GO:0030091">
    <property type="term" value="P:protein repair"/>
    <property type="evidence" value="ECO:0007669"/>
    <property type="project" value="UniProtKB-UniRule"/>
</dbReference>
<dbReference type="CDD" id="cd02440">
    <property type="entry name" value="AdoMet_MTases"/>
    <property type="match status" value="1"/>
</dbReference>
<dbReference type="FunFam" id="3.40.50.150:FF:000010">
    <property type="entry name" value="Protein-L-isoaspartate O-methyltransferase"/>
    <property type="match status" value="1"/>
</dbReference>
<dbReference type="Gene3D" id="3.40.50.150">
    <property type="entry name" value="Vaccinia Virus protein VP39"/>
    <property type="match status" value="1"/>
</dbReference>
<dbReference type="HAMAP" id="MF_00090">
    <property type="entry name" value="PIMT"/>
    <property type="match status" value="1"/>
</dbReference>
<dbReference type="InterPro" id="IPR000682">
    <property type="entry name" value="PCMT"/>
</dbReference>
<dbReference type="InterPro" id="IPR029063">
    <property type="entry name" value="SAM-dependent_MTases_sf"/>
</dbReference>
<dbReference type="NCBIfam" id="TIGR00080">
    <property type="entry name" value="pimt"/>
    <property type="match status" value="1"/>
</dbReference>
<dbReference type="NCBIfam" id="NF001453">
    <property type="entry name" value="PRK00312.1"/>
    <property type="match status" value="1"/>
</dbReference>
<dbReference type="PANTHER" id="PTHR11579">
    <property type="entry name" value="PROTEIN-L-ISOASPARTATE O-METHYLTRANSFERASE"/>
    <property type="match status" value="1"/>
</dbReference>
<dbReference type="PANTHER" id="PTHR11579:SF0">
    <property type="entry name" value="PROTEIN-L-ISOASPARTATE(D-ASPARTATE) O-METHYLTRANSFERASE"/>
    <property type="match status" value="1"/>
</dbReference>
<dbReference type="Pfam" id="PF01135">
    <property type="entry name" value="PCMT"/>
    <property type="match status" value="1"/>
</dbReference>
<dbReference type="SUPFAM" id="SSF53335">
    <property type="entry name" value="S-adenosyl-L-methionine-dependent methyltransferases"/>
    <property type="match status" value="1"/>
</dbReference>
<dbReference type="PROSITE" id="PS01279">
    <property type="entry name" value="PCMT"/>
    <property type="match status" value="1"/>
</dbReference>
<reference key="1">
    <citation type="journal article" date="2008" name="BMC Genomics">
        <title>The genome sequence of the fish pathogen Aliivibrio salmonicida strain LFI1238 shows extensive evidence of gene decay.</title>
        <authorList>
            <person name="Hjerde E."/>
            <person name="Lorentzen M.S."/>
            <person name="Holden M.T."/>
            <person name="Seeger K."/>
            <person name="Paulsen S."/>
            <person name="Bason N."/>
            <person name="Churcher C."/>
            <person name="Harris D."/>
            <person name="Norbertczak H."/>
            <person name="Quail M.A."/>
            <person name="Sanders S."/>
            <person name="Thurston S."/>
            <person name="Parkhill J."/>
            <person name="Willassen N.P."/>
            <person name="Thomson N.R."/>
        </authorList>
    </citation>
    <scope>NUCLEOTIDE SEQUENCE [LARGE SCALE GENOMIC DNA]</scope>
    <source>
        <strain>LFI1238</strain>
    </source>
</reference>
<protein>
    <recommendedName>
        <fullName evidence="1">Protein-L-isoaspartate O-methyltransferase</fullName>
        <ecNumber evidence="1">2.1.1.77</ecNumber>
    </recommendedName>
    <alternativeName>
        <fullName evidence="1">L-isoaspartyl protein carboxyl methyltransferase</fullName>
    </alternativeName>
    <alternativeName>
        <fullName evidence="1">Protein L-isoaspartyl methyltransferase</fullName>
    </alternativeName>
    <alternativeName>
        <fullName evidence="1">Protein-beta-aspartate methyltransferase</fullName>
        <shortName evidence="1">PIMT</shortName>
    </alternativeName>
</protein>
<evidence type="ECO:0000255" key="1">
    <source>
        <dbReference type="HAMAP-Rule" id="MF_00090"/>
    </source>
</evidence>
<name>PIMT_ALISL</name>
<organism>
    <name type="scientific">Aliivibrio salmonicida (strain LFI1238)</name>
    <name type="common">Vibrio salmonicida (strain LFI1238)</name>
    <dbReference type="NCBI Taxonomy" id="316275"/>
    <lineage>
        <taxon>Bacteria</taxon>
        <taxon>Pseudomonadati</taxon>
        <taxon>Pseudomonadota</taxon>
        <taxon>Gammaproteobacteria</taxon>
        <taxon>Vibrionales</taxon>
        <taxon>Vibrionaceae</taxon>
        <taxon>Aliivibrio</taxon>
    </lineage>
</organism>
<sequence>MMHSRSELLDQFLRQQGILNEDILLAIRQLPRERFVPEALAHQAYQNNALPIGEGQTISQPYIVAKMTELLELQYDSNLLEIGTGSGYQTAVLAKLVGHVHSVERIKSLQWNAKRLLKLLDLYNISTKHADGWNGWPSKSPFDAIIVTAAAESIPNDLLYQLKEGGRLVIPIGTESQQLLRITRHGDEFHSEVIEEVRFVPLVSGDLA</sequence>
<accession>B6EKL2</accession>
<proteinExistence type="inferred from homology"/>
<keyword id="KW-0963">Cytoplasm</keyword>
<keyword id="KW-0489">Methyltransferase</keyword>
<keyword id="KW-0949">S-adenosyl-L-methionine</keyword>
<keyword id="KW-0808">Transferase</keyword>